<feature type="chain" id="PRO_1000046474" description="Phosphoribosylformylglycinamidine cyclo-ligase">
    <location>
        <begin position="1"/>
        <end position="342"/>
    </location>
</feature>
<name>PUR5_STAA1</name>
<proteinExistence type="inferred from homology"/>
<evidence type="ECO:0000255" key="1">
    <source>
        <dbReference type="HAMAP-Rule" id="MF_00741"/>
    </source>
</evidence>
<accession>A7X0W4</accession>
<dbReference type="EC" id="6.3.3.1" evidence="1"/>
<dbReference type="EMBL" id="AP009324">
    <property type="protein sequence ID" value="BAF77946.1"/>
    <property type="molecule type" value="Genomic_DNA"/>
</dbReference>
<dbReference type="RefSeq" id="WP_000030811.1">
    <property type="nucleotide sequence ID" value="NC_009782.1"/>
</dbReference>
<dbReference type="SMR" id="A7X0W4"/>
<dbReference type="KEGG" id="saw:SAHV_1063"/>
<dbReference type="HOGENOM" id="CLU_047116_0_0_9"/>
<dbReference type="UniPathway" id="UPA00074">
    <property type="reaction ID" value="UER00129"/>
</dbReference>
<dbReference type="GO" id="GO:0005829">
    <property type="term" value="C:cytosol"/>
    <property type="evidence" value="ECO:0007669"/>
    <property type="project" value="TreeGrafter"/>
</dbReference>
<dbReference type="GO" id="GO:0005524">
    <property type="term" value="F:ATP binding"/>
    <property type="evidence" value="ECO:0007669"/>
    <property type="project" value="UniProtKB-KW"/>
</dbReference>
<dbReference type="GO" id="GO:0004637">
    <property type="term" value="F:phosphoribosylamine-glycine ligase activity"/>
    <property type="evidence" value="ECO:0007669"/>
    <property type="project" value="TreeGrafter"/>
</dbReference>
<dbReference type="GO" id="GO:0004641">
    <property type="term" value="F:phosphoribosylformylglycinamidine cyclo-ligase activity"/>
    <property type="evidence" value="ECO:0007669"/>
    <property type="project" value="UniProtKB-UniRule"/>
</dbReference>
<dbReference type="GO" id="GO:0006189">
    <property type="term" value="P:'de novo' IMP biosynthetic process"/>
    <property type="evidence" value="ECO:0007669"/>
    <property type="project" value="UniProtKB-UniRule"/>
</dbReference>
<dbReference type="GO" id="GO:0046084">
    <property type="term" value="P:adenine biosynthetic process"/>
    <property type="evidence" value="ECO:0007669"/>
    <property type="project" value="TreeGrafter"/>
</dbReference>
<dbReference type="CDD" id="cd02196">
    <property type="entry name" value="PurM"/>
    <property type="match status" value="1"/>
</dbReference>
<dbReference type="FunFam" id="3.30.1330.10:FF:000001">
    <property type="entry name" value="Phosphoribosylformylglycinamidine cyclo-ligase"/>
    <property type="match status" value="1"/>
</dbReference>
<dbReference type="FunFam" id="3.90.650.10:FF:000001">
    <property type="entry name" value="Phosphoribosylformylglycinamidine cyclo-ligase"/>
    <property type="match status" value="1"/>
</dbReference>
<dbReference type="Gene3D" id="3.90.650.10">
    <property type="entry name" value="PurM-like C-terminal domain"/>
    <property type="match status" value="1"/>
</dbReference>
<dbReference type="Gene3D" id="3.30.1330.10">
    <property type="entry name" value="PurM-like, N-terminal domain"/>
    <property type="match status" value="1"/>
</dbReference>
<dbReference type="HAMAP" id="MF_00741">
    <property type="entry name" value="AIRS"/>
    <property type="match status" value="1"/>
</dbReference>
<dbReference type="InterPro" id="IPR010918">
    <property type="entry name" value="PurM-like_C_dom"/>
</dbReference>
<dbReference type="InterPro" id="IPR036676">
    <property type="entry name" value="PurM-like_C_sf"/>
</dbReference>
<dbReference type="InterPro" id="IPR016188">
    <property type="entry name" value="PurM-like_N"/>
</dbReference>
<dbReference type="InterPro" id="IPR036921">
    <property type="entry name" value="PurM-like_N_sf"/>
</dbReference>
<dbReference type="InterPro" id="IPR004733">
    <property type="entry name" value="PurM_cligase"/>
</dbReference>
<dbReference type="NCBIfam" id="TIGR00878">
    <property type="entry name" value="purM"/>
    <property type="match status" value="1"/>
</dbReference>
<dbReference type="PANTHER" id="PTHR10520:SF12">
    <property type="entry name" value="TRIFUNCTIONAL PURINE BIOSYNTHETIC PROTEIN ADENOSINE-3"/>
    <property type="match status" value="1"/>
</dbReference>
<dbReference type="PANTHER" id="PTHR10520">
    <property type="entry name" value="TRIFUNCTIONAL PURINE BIOSYNTHETIC PROTEIN ADENOSINE-3-RELATED"/>
    <property type="match status" value="1"/>
</dbReference>
<dbReference type="Pfam" id="PF00586">
    <property type="entry name" value="AIRS"/>
    <property type="match status" value="1"/>
</dbReference>
<dbReference type="Pfam" id="PF02769">
    <property type="entry name" value="AIRS_C"/>
    <property type="match status" value="1"/>
</dbReference>
<dbReference type="SUPFAM" id="SSF56042">
    <property type="entry name" value="PurM C-terminal domain-like"/>
    <property type="match status" value="1"/>
</dbReference>
<dbReference type="SUPFAM" id="SSF55326">
    <property type="entry name" value="PurM N-terminal domain-like"/>
    <property type="match status" value="1"/>
</dbReference>
<sequence length="342" mass="36989">MSKAYEQSGVNIHAGYEAVERMSSHVKRTMRKEVIGGLGGFGATFDLSQLNMTAPVLVSGTDGVGTKLKLAIDYGKHDSIGIDAVAMCVNDILTTGAEPLYFLDYIATNKVVPEVIEQIVKGISDACVETNTALIGGETAEMGEMYHEGEYDVAGFAVGAVEKDDYVDGSEVKEGQVVIGLASSGIHSNGYSLVRKLINESGIDLASNFDNRPFIDVFLEPTKLYVKPVLALKKEVSIKAMNHITGGGFYENIPRALPAGYAARIDTTSFPTPKIFDWLQQQGNIDTNEMYNIFNMGIGYTVIVDEKDASRALKILAEQNVEAYQIGHIVKNESTAIELLGV</sequence>
<comment type="catalytic activity">
    <reaction evidence="1">
        <text>2-formamido-N(1)-(5-O-phospho-beta-D-ribosyl)acetamidine + ATP = 5-amino-1-(5-phospho-beta-D-ribosyl)imidazole + ADP + phosphate + H(+)</text>
        <dbReference type="Rhea" id="RHEA:23032"/>
        <dbReference type="ChEBI" id="CHEBI:15378"/>
        <dbReference type="ChEBI" id="CHEBI:30616"/>
        <dbReference type="ChEBI" id="CHEBI:43474"/>
        <dbReference type="ChEBI" id="CHEBI:137981"/>
        <dbReference type="ChEBI" id="CHEBI:147287"/>
        <dbReference type="ChEBI" id="CHEBI:456216"/>
        <dbReference type="EC" id="6.3.3.1"/>
    </reaction>
</comment>
<comment type="pathway">
    <text evidence="1">Purine metabolism; IMP biosynthesis via de novo pathway; 5-amino-1-(5-phospho-D-ribosyl)imidazole from N(2)-formyl-N(1)-(5-phospho-D-ribosyl)glycinamide: step 2/2.</text>
</comment>
<comment type="subcellular location">
    <subcellularLocation>
        <location evidence="1">Cytoplasm</location>
    </subcellularLocation>
</comment>
<comment type="similarity">
    <text evidence="1">Belongs to the AIR synthase family.</text>
</comment>
<protein>
    <recommendedName>
        <fullName evidence="1">Phosphoribosylformylglycinamidine cyclo-ligase</fullName>
        <ecNumber evidence="1">6.3.3.1</ecNumber>
    </recommendedName>
    <alternativeName>
        <fullName evidence="1">AIR synthase</fullName>
    </alternativeName>
    <alternativeName>
        <fullName evidence="1">AIRS</fullName>
    </alternativeName>
    <alternativeName>
        <fullName evidence="1">Phosphoribosyl-aminoimidazole synthetase</fullName>
    </alternativeName>
</protein>
<gene>
    <name evidence="1" type="primary">purM</name>
    <name type="ordered locus">SAHV_1063</name>
</gene>
<keyword id="KW-0067">ATP-binding</keyword>
<keyword id="KW-0963">Cytoplasm</keyword>
<keyword id="KW-0436">Ligase</keyword>
<keyword id="KW-0547">Nucleotide-binding</keyword>
<keyword id="KW-0658">Purine biosynthesis</keyword>
<organism>
    <name type="scientific">Staphylococcus aureus (strain Mu3 / ATCC 700698)</name>
    <dbReference type="NCBI Taxonomy" id="418127"/>
    <lineage>
        <taxon>Bacteria</taxon>
        <taxon>Bacillati</taxon>
        <taxon>Bacillota</taxon>
        <taxon>Bacilli</taxon>
        <taxon>Bacillales</taxon>
        <taxon>Staphylococcaceae</taxon>
        <taxon>Staphylococcus</taxon>
    </lineage>
</organism>
<reference key="1">
    <citation type="journal article" date="2008" name="Antimicrob. Agents Chemother.">
        <title>Mutated response regulator graR is responsible for phenotypic conversion of Staphylococcus aureus from heterogeneous vancomycin-intermediate resistance to vancomycin-intermediate resistance.</title>
        <authorList>
            <person name="Neoh H.-M."/>
            <person name="Cui L."/>
            <person name="Yuzawa H."/>
            <person name="Takeuchi F."/>
            <person name="Matsuo M."/>
            <person name="Hiramatsu K."/>
        </authorList>
    </citation>
    <scope>NUCLEOTIDE SEQUENCE [LARGE SCALE GENOMIC DNA]</scope>
    <source>
        <strain>Mu3 / ATCC 700698</strain>
    </source>
</reference>